<feature type="initiator methionine" description="Removed; by host" evidence="2">
    <location>
        <position position="1"/>
    </location>
</feature>
<feature type="chain" id="PRO_0000038087" description="Large envelope protein" evidence="2">
    <location>
        <begin position="2"/>
        <end position="400"/>
    </location>
</feature>
<feature type="topological domain" description="Intravirion; in internal conformation" evidence="2">
    <location>
        <begin position="2"/>
        <end position="253"/>
    </location>
</feature>
<feature type="topological domain" description="Virion surface; in external conformation" evidence="2">
    <location>
        <begin position="2"/>
        <end position="181"/>
    </location>
</feature>
<feature type="transmembrane region" description="Helical; Name=TM1; Note=In external conformation" evidence="2">
    <location>
        <begin position="182"/>
        <end position="202"/>
    </location>
</feature>
<feature type="topological domain" description="Intravirion; in external conformation" evidence="2">
    <location>
        <begin position="203"/>
        <end position="253"/>
    </location>
</feature>
<feature type="transmembrane region" description="Helical; Name=TM2" evidence="2">
    <location>
        <begin position="254"/>
        <end position="274"/>
    </location>
</feature>
<feature type="topological domain" description="Virion surface" evidence="2">
    <location>
        <begin position="275"/>
        <end position="348"/>
    </location>
</feature>
<feature type="transmembrane region" description="Helical" evidence="2">
    <location>
        <begin position="349"/>
        <end position="369"/>
    </location>
</feature>
<feature type="topological domain" description="Intravirion" evidence="2">
    <location>
        <begin position="370"/>
        <end position="375"/>
    </location>
</feature>
<feature type="transmembrane region" description="Helical; Name=TM3" evidence="2">
    <location>
        <begin position="376"/>
        <end position="398"/>
    </location>
</feature>
<feature type="topological domain" description="Virion surface" evidence="2">
    <location>
        <begin position="399"/>
        <end position="400"/>
    </location>
</feature>
<feature type="region of interest" description="Disordered" evidence="3">
    <location>
        <begin position="1"/>
        <end position="20"/>
    </location>
</feature>
<feature type="region of interest" description="Pre-S" evidence="2">
    <location>
        <begin position="2"/>
        <end position="174"/>
    </location>
</feature>
<feature type="region of interest" description="Pre-S1" evidence="2">
    <location>
        <begin position="2"/>
        <end position="119"/>
    </location>
</feature>
<feature type="region of interest" description="Disordered" evidence="3">
    <location>
        <begin position="89"/>
        <end position="115"/>
    </location>
</feature>
<feature type="region of interest" description="Pre-S2" evidence="2">
    <location>
        <begin position="120"/>
        <end position="174"/>
    </location>
</feature>
<feature type="compositionally biased region" description="Polar residues" evidence="3">
    <location>
        <begin position="89"/>
        <end position="106"/>
    </location>
</feature>
<feature type="lipid moiety-binding region" description="N-myristoyl glycine; by host" evidence="2">
    <location>
        <position position="2"/>
    </location>
</feature>
<feature type="glycosylation site" description="N-linked (GlcNAc...) asparagine; by host; partial" evidence="2">
    <location>
        <position position="320"/>
    </location>
</feature>
<feature type="splice variant" id="VSP_030414" description="In isoform S." evidence="9">
    <location>
        <begin position="1"/>
        <end position="174"/>
    </location>
</feature>
<feature type="splice variant" id="VSP_030415" description="In isoform M." evidence="9">
    <location>
        <begin position="1"/>
        <end position="119"/>
    </location>
</feature>
<feature type="modified residue" description="N-acetylmethionine" evidence="9">
    <location sequence="P03141-2">
        <position position="1"/>
    </location>
</feature>
<feature type="glycosylation site" description="N-linked (GlcNAc...) asparagine" evidence="9">
    <location sequence="P03141-2">
        <position position="4"/>
    </location>
</feature>
<evidence type="ECO:0000250" key="1">
    <source>
        <dbReference type="UniProtKB" id="P03138"/>
    </source>
</evidence>
<evidence type="ECO:0000255" key="2">
    <source>
        <dbReference type="HAMAP-Rule" id="MF_04075"/>
    </source>
</evidence>
<evidence type="ECO:0000256" key="3">
    <source>
        <dbReference type="SAM" id="MobiDB-lite"/>
    </source>
</evidence>
<evidence type="ECO:0000269" key="4">
    <source>
    </source>
</evidence>
<evidence type="ECO:0000269" key="5">
    <source>
    </source>
</evidence>
<evidence type="ECO:0000269" key="6">
    <source>
    </source>
</evidence>
<evidence type="ECO:0000269" key="7">
    <source>
    </source>
</evidence>
<evidence type="ECO:0000269" key="8">
    <source>
    </source>
</evidence>
<evidence type="ECO:0000305" key="9"/>
<comment type="function">
    <text evidence="2">The large envelope protein exists in two topological conformations, one which is termed 'external' or Le-HBsAg and the other 'internal' or Li-HBsAg. In its external conformation the protein attaches the virus to cell receptors and thereby initiating infection. This interaction determines the species specificity and liver tropism. This attachment induces virion internalization predominantly through caveolin-mediated endocytosis. The large envelope protein also assures fusion between virion membrane and endosomal membrane. In its internal conformation the protein plays a role in virion morphogenesis and mediates the contact with the nucleocapsid like a matrix protein.</text>
</comment>
<comment type="function">
    <text evidence="2">The middle envelope protein plays an important role in the budding of the virion. It is involved in the induction of budding in a nucleocapsid independent way. In this process the majority of envelope proteins bud to form subviral lipoprotein particles of 22 nm of diameter that do not contain a nucleocapsid.</text>
</comment>
<comment type="subunit">
    <molecule>Isoform L</molecule>
    <text evidence="5 7">In its internal form (Li-HBsAg), interacts with the capsid protein and with the isoform S (PubMed:31700077). Interacts with host chaperone CANX (PubMed:9188622).</text>
</comment>
<comment type="subunit">
    <molecule>Isoform M</molecule>
    <text evidence="8">Associates with host chaperone CANX through its pre-S2 N glycan; this association may be essential for isoform M proper secretion.</text>
</comment>
<comment type="subunit">
    <molecule>Isoform S</molecule>
    <text evidence="5 6">Interacts with isoform L (PubMed:31700077). Interacts with the antigens of satellite virus HDV (HDVAgs); this interaction is required for encapsidation of HDV genomic RNA (PubMed:8289368).</text>
</comment>
<comment type="subcellular location">
    <subcellularLocation>
        <location evidence="2">Virion membrane</location>
    </subcellularLocation>
</comment>
<comment type="alternative products">
    <event type="alternative splicing"/>
    <event type="alternative initiation"/>
    <isoform>
        <id>P03141-1</id>
        <name>L</name>
        <name>Large envelope protein</name>
        <name>LHB</name>
        <name>L-HBsAg</name>
        <sequence type="displayed"/>
    </isoform>
    <isoform>
        <id>P03141-2</id>
        <name>M</name>
        <name>Middle envelope protein</name>
        <name>MHB</name>
        <name>M-HBsAg</name>
        <sequence type="described" ref="VSP_030415"/>
    </isoform>
    <isoform>
        <id>P03141-3</id>
        <name>S</name>
        <name>Small envelope protein</name>
        <name>SHB</name>
        <name>S-HBsAg</name>
        <sequence type="described" ref="VSP_030414"/>
    </isoform>
</comment>
<comment type="domain">
    <text evidence="2">The large envelope protein is synthesized with the pre-S region at the cytosolic side of the endoplasmic reticulum and, hence will be within the virion after budding. Therefore the pre-S region is not N-glycosylated. Later a post-translational translocation of N-terminal pre-S and TM1 domains occur in about 50% of proteins at the virion surface. These molecules change their topology by an unknown mechanism, resulting in exposure of pre-S region at virion surface. For isoform M in contrast, the pre-S2 region is translocated cotranslationally to the endoplasmic reticulum lumen and is N-glycosylated.</text>
</comment>
<comment type="PTM">
    <text evidence="1 2">Isoform M is N-terminally acetylated by host at a ratio of 90%, and N-glycosylated by host at the pre-S2 region.</text>
</comment>
<comment type="PTM">
    <text evidence="2 4">Myristoylated.</text>
</comment>
<comment type="biotechnology">
    <text>Systematic vaccination of individuals at risk of exposure to the virus has been the main method of controlling the morbidity and mortality associated with hepatitis B. The first hepatitis B vaccine was manufactured by the purification and inactivation of HBsAg obtained from the plasma of chronic hepatitis B virus carriers. The vaccine is now produced by recombinant DNA techniques and expression of the S isoform in yeast cells. The pre-S region do not seem to induce strong enough antigenic response.</text>
</comment>
<comment type="similarity">
    <text evidence="2">Belongs to the orthohepadnavirus major surface antigen family.</text>
</comment>
<accession>P03141</accession>
<protein>
    <recommendedName>
        <fullName evidence="2">Large envelope protein</fullName>
    </recommendedName>
    <alternativeName>
        <fullName evidence="2">L glycoprotein</fullName>
    </alternativeName>
    <alternativeName>
        <fullName evidence="2">L-HBsAg</fullName>
        <shortName evidence="2">LHB</shortName>
    </alternativeName>
    <alternativeName>
        <fullName evidence="2">Large S protein</fullName>
    </alternativeName>
    <alternativeName>
        <fullName evidence="2">Large surface protein</fullName>
    </alternativeName>
    <alternativeName>
        <fullName evidence="2">Major surface antigen</fullName>
    </alternativeName>
</protein>
<organism>
    <name type="scientific">Hepatitis B virus genotype A2 subtype adw2 (strain Rutter 1979)</name>
    <name type="common">HBV-A</name>
    <dbReference type="NCBI Taxonomy" id="480116"/>
    <lineage>
        <taxon>Viruses</taxon>
        <taxon>Riboviria</taxon>
        <taxon>Pararnavirae</taxon>
        <taxon>Artverviricota</taxon>
        <taxon>Revtraviricetes</taxon>
        <taxon>Blubervirales</taxon>
        <taxon>Hepadnaviridae</taxon>
        <taxon>Orthohepadnavirus</taxon>
        <taxon>Hepatitis B virus</taxon>
    </lineage>
</organism>
<organismHost>
    <name type="scientific">Homo sapiens</name>
    <name type="common">Human</name>
    <dbReference type="NCBI Taxonomy" id="9606"/>
</organismHost>
<organismHost>
    <name type="scientific">Pan troglodytes</name>
    <name type="common">Chimpanzee</name>
    <dbReference type="NCBI Taxonomy" id="9598"/>
</organismHost>
<sequence length="400" mass="43705">MGGWSSKPRKGMGTNLSVPNPLGFFPDHQLDPAFGANSNNPDWDFNPVKDDWPAANQVGVGAFGPRLTPPHGGILGWSPQAQGILTTVSTIPPPASTNRQSGRQPTPISPPLRDSHPQAMQWNSTAFHQTLQDPRVRGLYLPAGGSSSGTVNPAPNIASHISSISARTGDPVTNMENITSGFLGPLLVLQAGFFLLTRILTIPQSLDSWWTSLNFLGGSPVCLGQNSQSPTSNHSPTSCPPICPGYRWMCLRRFIIFLFILLLCLIFLLVLLDYQGMLPVCPLIPGSTTTSTGPCKTCTTPAQGNSMFPSCCCTKPTDGNCTCIPIPSSWAFAKYLWEWASVRFSWLSLLVPFVQWFVGLSPTVWLSAIWMMWYWGPSLYSIVSPFIPLLPIFFCLWVYI</sequence>
<gene>
    <name evidence="2" type="primary">S</name>
</gene>
<reference key="1">
    <citation type="book" date="1980" name="Animal virus genetics">
        <title>The nucleotide sequence of the hepatitis B viral genome and the identification of the major viral genes.</title>
        <editorList>
            <person name="Field B.N."/>
            <person name="Jaenisch R."/>
            <person name="Fox C.F."/>
        </editorList>
        <authorList>
            <person name="Valenzuela P."/>
            <person name="Quiroga M."/>
            <person name="Zaldivar J."/>
            <person name="Gray P."/>
            <person name="Rutter W.J."/>
        </authorList>
    </citation>
    <scope>NUCLEOTIDE SEQUENCE [GENOMIC DNA]</scope>
</reference>
<reference key="2">
    <citation type="journal article" date="1979" name="Nature">
        <title>Nucleotide sequence of the gene coding for the major protein of hepatitis B virus surface antigen.</title>
        <authorList>
            <person name="Valenzuela P."/>
            <person name="Gray P."/>
            <person name="Quiroga M."/>
            <person name="Zaldivar J."/>
            <person name="Goodman H.M."/>
            <person name="Rutter W.J."/>
        </authorList>
    </citation>
    <scope>NUCLEOTIDE SEQUENCE [GENOMIC DNA] OF 175-400</scope>
</reference>
<reference key="3">
    <citation type="journal article" date="1984" name="Lancet">
        <title>Clinical evaluation of a recombinant hepatitis B vaccine.</title>
        <authorList>
            <person name="Jilg W."/>
            <person name="Lorbeer B."/>
            <person name="Schmidt M."/>
            <person name="Wilske B."/>
            <person name="Zoulek G."/>
            <person name="Deinhardt F."/>
        </authorList>
    </citation>
    <scope>RECOMBINANT VACCINE</scope>
</reference>
<reference key="4">
    <citation type="journal article" date="1984" name="J. Virol.">
        <title>Large surface proteins of hepatitis B virus containing the pre-s sequence.</title>
        <authorList>
            <person name="Heermann K.H."/>
            <person name="Goldmann U."/>
            <person name="Schwartz W."/>
            <person name="Seyffarth T."/>
            <person name="Baumgarten H."/>
            <person name="Gerlich W.H."/>
        </authorList>
    </citation>
    <scope>CHARACTERIZATION</scope>
    <source>
        <strain>Isolate clinical</strain>
    </source>
</reference>
<reference key="5">
    <citation type="journal article" date="1991" name="J. Virol.">
        <title>Mutational analysis of hepatitis B surface antigen particle assembly and secretion.</title>
        <authorList>
            <person name="Bruss V."/>
            <person name="Ganem D."/>
        </authorList>
    </citation>
    <scope>FUNCTION</scope>
</reference>
<reference key="6">
    <citation type="journal article" date="1994" name="EMBO J.">
        <title>Post-translational alterations in transmembrane topology of the hepatitis B virus large envelope protein.</title>
        <authorList>
            <person name="Bruss V."/>
            <person name="Lu X."/>
            <person name="Thomssen R."/>
            <person name="Gerlich W.H."/>
        </authorList>
    </citation>
    <scope>TRANSMEMBRANE TOPOLOGY</scope>
</reference>
<reference key="7">
    <citation type="journal article" date="1994" name="J. Virol.">
        <title>Mutational analysis of delta antigen: effect on assembly and replication of hepatitis delta virus.</title>
        <authorList>
            <person name="Chang M.F."/>
            <person name="Chen C.J."/>
            <person name="Chang S.C."/>
        </authorList>
    </citation>
    <scope>INTERACTION WITH HDV ANTIGENS (ISOFORM S)</scope>
</reference>
<reference key="8">
    <citation type="journal article" date="1997" name="Proc. Natl. Acad. Sci. U.S.A.">
        <title>Hepatitis B virus (HBV) envelope glycoproteins vary drastically in their sensitivity to glycan processing: evidence that alteration of a single N-linked glycosylation site can regulate HBV secretion.</title>
        <authorList>
            <person name="Mehta A."/>
            <person name="Lu X."/>
            <person name="Block T.M."/>
            <person name="Blumberg B.S."/>
            <person name="Dwek R.A."/>
        </authorList>
    </citation>
    <scope>FUNCTION (ISOFORM M)</scope>
</reference>
<reference key="9">
    <citation type="journal article" date="1997" name="Proc. Natl. Acad. Sci. U.S.A.">
        <title>Aberrant trafficking of hepatitis B virus glycoproteins in cells in which N-glycan processing is inhibited.</title>
        <authorList>
            <person name="Lu X."/>
            <person name="Mehta A."/>
            <person name="Dadmarz M."/>
            <person name="Dwek R."/>
            <person name="Blumberg B.S."/>
            <person name="Block T.M."/>
        </authorList>
    </citation>
    <scope>FUNCTION OF GLYCOSYLATION</scope>
</reference>
<reference key="10">
    <citation type="journal article" date="1997" name="J. Virol.">
        <title>Formation of intracellular particles by hepatitis B virus large surface protein.</title>
        <authorList>
            <person name="Xu Z."/>
            <person name="Bruss V."/>
            <person name="Yen T.S."/>
        </authorList>
    </citation>
    <scope>INTERACTION WITH HOST CANX (ISOFORM L)</scope>
</reference>
<reference key="11">
    <citation type="journal article" date="1996" name="Intervirology">
        <title>Functions of the large hepatitis B virus surface protein in viral particle morphogenesis.</title>
        <authorList>
            <person name="Bruss V."/>
            <person name="Gerhardt E."/>
            <person name="Vieluf K."/>
            <person name="Wunderlich G."/>
        </authorList>
    </citation>
    <scope>REVIEW</scope>
</reference>
<reference key="12">
    <citation type="journal article" date="1998" name="Adv. Exp. Med. Biol.">
        <title>Role of glycan processing in hepatitis B virus envelope protein trafficking.</title>
        <authorList>
            <person name="Block T.M."/>
            <person name="Lu X."/>
            <person name="Mehta A."/>
            <person name="Park J."/>
            <person name="Blumberg B.S."/>
            <person name="Dwek R."/>
        </authorList>
    </citation>
    <scope>REVIEW</scope>
</reference>
<reference key="13">
    <citation type="journal article" date="1998" name="J. Virol.">
        <title>Role for calnexin and N-linked glycosylation in the assembly and secretion of hepatitis B virus middle envelope protein particles.</title>
        <authorList>
            <person name="Werr M."/>
            <person name="Prange R."/>
        </authorList>
    </citation>
    <scope>INTERACTION WITH HOST CANX (ISOFORM M)</scope>
</reference>
<reference key="14">
    <citation type="journal article" date="2001" name="J. Pept. Res.">
        <title>N-terminal myristylation of HBV preS1 domain enhances receptor recognition.</title>
        <authorList>
            <person name="De Falco S."/>
            <person name="Ruvo M."/>
            <person name="Verdoliva A."/>
            <person name="Scarallo A."/>
            <person name="Raimondo D."/>
            <person name="Raucci A."/>
            <person name="Fassina G."/>
        </authorList>
    </citation>
    <scope>MYRISTOYLATION AT GLY-2</scope>
</reference>
<reference key="15">
    <citation type="journal article" date="2004" name="Virus Res.">
        <title>Envelopment of the hepatitis B virus nucleocapsid.</title>
        <authorList>
            <person name="Bruss V."/>
        </authorList>
    </citation>
    <scope>REVIEW</scope>
</reference>
<reference key="16">
    <citation type="journal article" date="2006" name="Cancer Sci.">
        <title>Hepatitis B virus pre-S mutants, endoplasmic reticulum stress and hepatocarcinogenesis.</title>
        <authorList>
            <person name="Wang H.C."/>
            <person name="Huang W."/>
            <person name="Lai M.D."/>
            <person name="Su I.J."/>
        </authorList>
    </citation>
    <scope>REVIEW</scope>
</reference>
<reference key="17">
    <citation type="journal article" date="2019" name="Sci. Rep.">
        <title>Direct interaction between the hepatitis B virus core and envelope proteins analyzed in a cellular context.</title>
        <authorList>
            <person name="Pastor F."/>
            <person name="Herrscher C."/>
            <person name="Patient R."/>
            <person name="Eymieux S."/>
            <person name="Moreau A."/>
            <person name="Burlaud-Gaillard J."/>
            <person name="Seigneuret F."/>
            <person name="de Rocquigny H."/>
            <person name="Roingeard P."/>
            <person name="Hourioux C."/>
        </authorList>
    </citation>
    <scope>INTERACTION WITH ISOFORM S (ISOFORM L)</scope>
    <scope>INTERACTION WITH THE CAPSID PROTEIN</scope>
    <scope>INTERACTION WITH ISOFORM L (ISOFORM S)</scope>
</reference>
<name>HBSAG_HBVA3</name>
<proteinExistence type="evidence at protein level"/>
<keyword id="KW-0007">Acetylation</keyword>
<keyword id="KW-0024">Alternative initiation</keyword>
<keyword id="KW-0025">Alternative splicing</keyword>
<keyword id="KW-1166">Caveolin-mediated endocytosis of virus by host</keyword>
<keyword id="KW-1170">Fusion of virus membrane with host endosomal membrane</keyword>
<keyword id="KW-1168">Fusion of virus membrane with host membrane</keyword>
<keyword id="KW-0325">Glycoprotein</keyword>
<keyword id="KW-0945">Host-virus interaction</keyword>
<keyword id="KW-0449">Lipoprotein</keyword>
<keyword id="KW-0472">Membrane</keyword>
<keyword id="KW-0519">Myristate</keyword>
<keyword id="KW-0812">Transmembrane</keyword>
<keyword id="KW-1133">Transmembrane helix</keyword>
<keyword id="KW-1161">Viral attachment to host cell</keyword>
<keyword id="KW-0261">Viral envelope protein</keyword>
<keyword id="KW-1162">Viral penetration into host cytoplasm</keyword>
<keyword id="KW-0946">Virion</keyword>
<keyword id="KW-1164">Virus endocytosis by host</keyword>
<keyword id="KW-1160">Virus entry into host cell</keyword>
<dbReference type="EMBL" id="X02763">
    <property type="protein sequence ID" value="CAA26539.1"/>
    <property type="molecule type" value="Genomic_DNA"/>
</dbReference>
<dbReference type="EMBL" id="J02205">
    <property type="protein sequence ID" value="AAA45524.1"/>
    <property type="molecule type" value="Genomic_RNA"/>
</dbReference>
<dbReference type="PIR" id="A03706">
    <property type="entry name" value="SAVLVD"/>
</dbReference>
<dbReference type="SMR" id="P03141"/>
<dbReference type="GlyCosmos" id="P03141">
    <property type="glycosylation" value="2 sites, No reported glycans"/>
</dbReference>
<dbReference type="ABCD" id="P03141">
    <property type="antibodies" value="3 sequenced antibodies"/>
</dbReference>
<dbReference type="Proteomes" id="UP000008766">
    <property type="component" value="Segment"/>
</dbReference>
<dbReference type="GO" id="GO:0016020">
    <property type="term" value="C:membrane"/>
    <property type="evidence" value="ECO:0007669"/>
    <property type="project" value="UniProtKB-UniRule"/>
</dbReference>
<dbReference type="GO" id="GO:0019031">
    <property type="term" value="C:viral envelope"/>
    <property type="evidence" value="ECO:0007669"/>
    <property type="project" value="UniProtKB-KW"/>
</dbReference>
<dbReference type="GO" id="GO:0055036">
    <property type="term" value="C:virion membrane"/>
    <property type="evidence" value="ECO:0007669"/>
    <property type="project" value="UniProtKB-SubCell"/>
</dbReference>
<dbReference type="GO" id="GO:0075513">
    <property type="term" value="P:caveolin-mediated endocytosis of virus by host cell"/>
    <property type="evidence" value="ECO:0007669"/>
    <property type="project" value="UniProtKB-KW"/>
</dbReference>
<dbReference type="GO" id="GO:0039654">
    <property type="term" value="P:fusion of virus membrane with host endosome membrane"/>
    <property type="evidence" value="ECO:0007669"/>
    <property type="project" value="UniProtKB-KW"/>
</dbReference>
<dbReference type="GO" id="GO:0019062">
    <property type="term" value="P:virion attachment to host cell"/>
    <property type="evidence" value="ECO:0007669"/>
    <property type="project" value="UniProtKB-UniRule"/>
</dbReference>
<dbReference type="HAMAP" id="MF_04075">
    <property type="entry name" value="HBV_HBSAG"/>
    <property type="match status" value="1"/>
</dbReference>
<dbReference type="InterPro" id="IPR000349">
    <property type="entry name" value="HBV_HBSAG"/>
</dbReference>
<dbReference type="Pfam" id="PF00695">
    <property type="entry name" value="vMSA"/>
    <property type="match status" value="1"/>
</dbReference>